<gene>
    <name evidence="1" type="primary">proS</name>
    <name type="ordered locus">Neut_1247</name>
</gene>
<comment type="function">
    <text evidence="1">Catalyzes the attachment of proline to tRNA(Pro) in a two-step reaction: proline is first activated by ATP to form Pro-AMP and then transferred to the acceptor end of tRNA(Pro). As ProRS can inadvertently accommodate and process non-cognate amino acids such as alanine and cysteine, to avoid such errors it has two additional distinct editing activities against alanine. One activity is designated as 'pretransfer' editing and involves the tRNA(Pro)-independent hydrolysis of activated Ala-AMP. The other activity is designated 'posttransfer' editing and involves deacylation of mischarged Ala-tRNA(Pro). The misacylated Cys-tRNA(Pro) is not edited by ProRS.</text>
</comment>
<comment type="catalytic activity">
    <reaction evidence="1">
        <text>tRNA(Pro) + L-proline + ATP = L-prolyl-tRNA(Pro) + AMP + diphosphate</text>
        <dbReference type="Rhea" id="RHEA:14305"/>
        <dbReference type="Rhea" id="RHEA-COMP:9700"/>
        <dbReference type="Rhea" id="RHEA-COMP:9702"/>
        <dbReference type="ChEBI" id="CHEBI:30616"/>
        <dbReference type="ChEBI" id="CHEBI:33019"/>
        <dbReference type="ChEBI" id="CHEBI:60039"/>
        <dbReference type="ChEBI" id="CHEBI:78442"/>
        <dbReference type="ChEBI" id="CHEBI:78532"/>
        <dbReference type="ChEBI" id="CHEBI:456215"/>
        <dbReference type="EC" id="6.1.1.15"/>
    </reaction>
</comment>
<comment type="subunit">
    <text evidence="1">Homodimer.</text>
</comment>
<comment type="subcellular location">
    <subcellularLocation>
        <location evidence="1">Cytoplasm</location>
    </subcellularLocation>
</comment>
<comment type="domain">
    <text evidence="1">Consists of three domains: the N-terminal catalytic domain, the editing domain and the C-terminal anticodon-binding domain.</text>
</comment>
<comment type="similarity">
    <text evidence="1">Belongs to the class-II aminoacyl-tRNA synthetase family. ProS type 1 subfamily.</text>
</comment>
<keyword id="KW-0030">Aminoacyl-tRNA synthetase</keyword>
<keyword id="KW-0067">ATP-binding</keyword>
<keyword id="KW-0963">Cytoplasm</keyword>
<keyword id="KW-0436">Ligase</keyword>
<keyword id="KW-0547">Nucleotide-binding</keyword>
<keyword id="KW-0648">Protein biosynthesis</keyword>
<name>SYP_NITEC</name>
<protein>
    <recommendedName>
        <fullName evidence="1">Proline--tRNA ligase</fullName>
        <ecNumber evidence="1">6.1.1.15</ecNumber>
    </recommendedName>
    <alternativeName>
        <fullName evidence="1">Prolyl-tRNA synthetase</fullName>
        <shortName evidence="1">ProRS</shortName>
    </alternativeName>
</protein>
<sequence>MRVSQFFLSTLKEAPAEAELASHRLMLRAGLIKRLGSGLYTWMPLGLRILHKIEHIIREEMNSSGALELLMPAVHPAELWQESGRWDVFGPQMLKIQDRHQHDFCFGPTHEEVIVDIARREIKSYRQLPINFYQIQTKFRDEIRPRFGVMRAREFIMKDAYSFHADLGSLEQTYQLMHETYSRIFTRIGLKFRAVAADTGAIGGSGSHEFHVLADSGEDAIAFCPDSDYAANIELAEAISHGILRKDPAGVMKKIATPDRKSCSDVAEFLSVPIEQTLKTLAVIADGRFYLLLLRGDHQLNETKTRKIPFLSNFEFADESRIIAKTGCLPGYLGPIGVKTEIIADRAVLEMSNFVCGANEEGYHLTQVNFERDLPLPVQVFDIRNVVTGDPSPDGKGMLEICRGIEVGHIFQLRTKYSEKMKATYLDESGQTQILEMGCYGIGVSRIVAAAIEQNCDERGIIFPVAIAPFQLSIIPIGYHKNLQIQAEVEKLYRACRAAGIEVLLDDREERPGVMFADQELIGIPHRIVIGERNLRDGMVEYQGRLDKTSRLLSLQEVIPVIREICGG</sequence>
<feature type="chain" id="PRO_0000288356" description="Proline--tRNA ligase">
    <location>
        <begin position="1"/>
        <end position="568"/>
    </location>
</feature>
<accession>Q0AGN2</accession>
<proteinExistence type="inferred from homology"/>
<organism>
    <name type="scientific">Nitrosomonas eutropha (strain DSM 101675 / C91 / Nm57)</name>
    <dbReference type="NCBI Taxonomy" id="335283"/>
    <lineage>
        <taxon>Bacteria</taxon>
        <taxon>Pseudomonadati</taxon>
        <taxon>Pseudomonadota</taxon>
        <taxon>Betaproteobacteria</taxon>
        <taxon>Nitrosomonadales</taxon>
        <taxon>Nitrosomonadaceae</taxon>
        <taxon>Nitrosomonas</taxon>
    </lineage>
</organism>
<dbReference type="EC" id="6.1.1.15" evidence="1"/>
<dbReference type="EMBL" id="CP000450">
    <property type="protein sequence ID" value="ABI59500.1"/>
    <property type="molecule type" value="Genomic_DNA"/>
</dbReference>
<dbReference type="RefSeq" id="WP_011634319.1">
    <property type="nucleotide sequence ID" value="NC_008344.1"/>
</dbReference>
<dbReference type="SMR" id="Q0AGN2"/>
<dbReference type="STRING" id="335283.Neut_1247"/>
<dbReference type="KEGG" id="net:Neut_1247"/>
<dbReference type="eggNOG" id="COG0442">
    <property type="taxonomic scope" value="Bacteria"/>
</dbReference>
<dbReference type="HOGENOM" id="CLU_016739_0_0_4"/>
<dbReference type="OrthoDB" id="9809052at2"/>
<dbReference type="Proteomes" id="UP000001966">
    <property type="component" value="Chromosome"/>
</dbReference>
<dbReference type="GO" id="GO:0005829">
    <property type="term" value="C:cytosol"/>
    <property type="evidence" value="ECO:0007669"/>
    <property type="project" value="TreeGrafter"/>
</dbReference>
<dbReference type="GO" id="GO:0002161">
    <property type="term" value="F:aminoacyl-tRNA deacylase activity"/>
    <property type="evidence" value="ECO:0007669"/>
    <property type="project" value="InterPro"/>
</dbReference>
<dbReference type="GO" id="GO:0005524">
    <property type="term" value="F:ATP binding"/>
    <property type="evidence" value="ECO:0007669"/>
    <property type="project" value="UniProtKB-UniRule"/>
</dbReference>
<dbReference type="GO" id="GO:0004827">
    <property type="term" value="F:proline-tRNA ligase activity"/>
    <property type="evidence" value="ECO:0007669"/>
    <property type="project" value="UniProtKB-UniRule"/>
</dbReference>
<dbReference type="GO" id="GO:0006433">
    <property type="term" value="P:prolyl-tRNA aminoacylation"/>
    <property type="evidence" value="ECO:0007669"/>
    <property type="project" value="UniProtKB-UniRule"/>
</dbReference>
<dbReference type="CDD" id="cd04334">
    <property type="entry name" value="ProRS-INS"/>
    <property type="match status" value="1"/>
</dbReference>
<dbReference type="CDD" id="cd00861">
    <property type="entry name" value="ProRS_anticodon_short"/>
    <property type="match status" value="1"/>
</dbReference>
<dbReference type="CDD" id="cd00779">
    <property type="entry name" value="ProRS_core_prok"/>
    <property type="match status" value="1"/>
</dbReference>
<dbReference type="FunFam" id="3.30.930.10:FF:000012">
    <property type="entry name" value="Proline--tRNA ligase"/>
    <property type="match status" value="1"/>
</dbReference>
<dbReference type="FunFam" id="3.30.930.10:FF:000097">
    <property type="entry name" value="Proline--tRNA ligase"/>
    <property type="match status" value="1"/>
</dbReference>
<dbReference type="Gene3D" id="3.40.50.800">
    <property type="entry name" value="Anticodon-binding domain"/>
    <property type="match status" value="1"/>
</dbReference>
<dbReference type="Gene3D" id="3.30.930.10">
    <property type="entry name" value="Bira Bifunctional Protein, Domain 2"/>
    <property type="match status" value="2"/>
</dbReference>
<dbReference type="HAMAP" id="MF_01569">
    <property type="entry name" value="Pro_tRNA_synth_type1"/>
    <property type="match status" value="1"/>
</dbReference>
<dbReference type="InterPro" id="IPR002314">
    <property type="entry name" value="aa-tRNA-synt_IIb"/>
</dbReference>
<dbReference type="InterPro" id="IPR006195">
    <property type="entry name" value="aa-tRNA-synth_II"/>
</dbReference>
<dbReference type="InterPro" id="IPR045864">
    <property type="entry name" value="aa-tRNA-synth_II/BPL/LPL"/>
</dbReference>
<dbReference type="InterPro" id="IPR004154">
    <property type="entry name" value="Anticodon-bd"/>
</dbReference>
<dbReference type="InterPro" id="IPR036621">
    <property type="entry name" value="Anticodon-bd_dom_sf"/>
</dbReference>
<dbReference type="InterPro" id="IPR002316">
    <property type="entry name" value="Pro-tRNA-ligase_IIa"/>
</dbReference>
<dbReference type="InterPro" id="IPR004500">
    <property type="entry name" value="Pro-tRNA-synth_IIa_bac-type"/>
</dbReference>
<dbReference type="InterPro" id="IPR023717">
    <property type="entry name" value="Pro-tRNA-Synthase_IIa_type1"/>
</dbReference>
<dbReference type="InterPro" id="IPR050062">
    <property type="entry name" value="Pro-tRNA_synthetase"/>
</dbReference>
<dbReference type="InterPro" id="IPR044140">
    <property type="entry name" value="ProRS_anticodon_short"/>
</dbReference>
<dbReference type="InterPro" id="IPR033730">
    <property type="entry name" value="ProRS_core_prok"/>
</dbReference>
<dbReference type="InterPro" id="IPR036754">
    <property type="entry name" value="YbaK/aa-tRNA-synt-asso_dom_sf"/>
</dbReference>
<dbReference type="InterPro" id="IPR007214">
    <property type="entry name" value="YbaK/aa-tRNA-synth-assoc-dom"/>
</dbReference>
<dbReference type="NCBIfam" id="NF006625">
    <property type="entry name" value="PRK09194.1"/>
    <property type="match status" value="1"/>
</dbReference>
<dbReference type="NCBIfam" id="TIGR00409">
    <property type="entry name" value="proS_fam_II"/>
    <property type="match status" value="1"/>
</dbReference>
<dbReference type="PANTHER" id="PTHR42753">
    <property type="entry name" value="MITOCHONDRIAL RIBOSOME PROTEIN L39/PROLYL-TRNA LIGASE FAMILY MEMBER"/>
    <property type="match status" value="1"/>
</dbReference>
<dbReference type="PANTHER" id="PTHR42753:SF2">
    <property type="entry name" value="PROLINE--TRNA LIGASE"/>
    <property type="match status" value="1"/>
</dbReference>
<dbReference type="Pfam" id="PF03129">
    <property type="entry name" value="HGTP_anticodon"/>
    <property type="match status" value="1"/>
</dbReference>
<dbReference type="Pfam" id="PF00587">
    <property type="entry name" value="tRNA-synt_2b"/>
    <property type="match status" value="1"/>
</dbReference>
<dbReference type="Pfam" id="PF04073">
    <property type="entry name" value="tRNA_edit"/>
    <property type="match status" value="1"/>
</dbReference>
<dbReference type="PIRSF" id="PIRSF001535">
    <property type="entry name" value="ProRS_1"/>
    <property type="match status" value="1"/>
</dbReference>
<dbReference type="PRINTS" id="PR01046">
    <property type="entry name" value="TRNASYNTHPRO"/>
</dbReference>
<dbReference type="SUPFAM" id="SSF52954">
    <property type="entry name" value="Class II aaRS ABD-related"/>
    <property type="match status" value="1"/>
</dbReference>
<dbReference type="SUPFAM" id="SSF55681">
    <property type="entry name" value="Class II aaRS and biotin synthetases"/>
    <property type="match status" value="1"/>
</dbReference>
<dbReference type="SUPFAM" id="SSF55826">
    <property type="entry name" value="YbaK/ProRS associated domain"/>
    <property type="match status" value="1"/>
</dbReference>
<dbReference type="PROSITE" id="PS50862">
    <property type="entry name" value="AA_TRNA_LIGASE_II"/>
    <property type="match status" value="1"/>
</dbReference>
<reference key="1">
    <citation type="journal article" date="2007" name="Environ. Microbiol.">
        <title>Whole-genome analysis of the ammonia-oxidizing bacterium, Nitrosomonas eutropha C91: implications for niche adaptation.</title>
        <authorList>
            <person name="Stein L.Y."/>
            <person name="Arp D.J."/>
            <person name="Berube P.M."/>
            <person name="Chain P.S."/>
            <person name="Hauser L."/>
            <person name="Jetten M.S."/>
            <person name="Klotz M.G."/>
            <person name="Larimer F.W."/>
            <person name="Norton J.M."/>
            <person name="Op den Camp H.J.M."/>
            <person name="Shin M."/>
            <person name="Wei X."/>
        </authorList>
    </citation>
    <scope>NUCLEOTIDE SEQUENCE [LARGE SCALE GENOMIC DNA]</scope>
    <source>
        <strain>DSM 101675 / C91 / Nm57</strain>
    </source>
</reference>
<evidence type="ECO:0000255" key="1">
    <source>
        <dbReference type="HAMAP-Rule" id="MF_01569"/>
    </source>
</evidence>